<name>CM2_PETHY</name>
<evidence type="ECO:0000250" key="1">
    <source>
        <dbReference type="UniProtKB" id="B4FNK8"/>
    </source>
</evidence>
<evidence type="ECO:0000250" key="2">
    <source>
        <dbReference type="UniProtKB" id="B4FUP5"/>
    </source>
</evidence>
<evidence type="ECO:0000255" key="3">
    <source>
        <dbReference type="PROSITE-ProRule" id="PRU00516"/>
    </source>
</evidence>
<evidence type="ECO:0000269" key="4">
    <source>
    </source>
</evidence>
<evidence type="ECO:0000303" key="5">
    <source>
    </source>
</evidence>
<comment type="function">
    <text evidence="4">Mediates the conversion of chorismate to prephenate.</text>
</comment>
<comment type="catalytic activity">
    <reaction evidence="3 4">
        <text>chorismate = prephenate</text>
        <dbReference type="Rhea" id="RHEA:13897"/>
        <dbReference type="ChEBI" id="CHEBI:29748"/>
        <dbReference type="ChEBI" id="CHEBI:29934"/>
        <dbReference type="EC" id="5.4.99.5"/>
    </reaction>
</comment>
<comment type="activity regulation">
    <text evidence="4">No allosteric regulation.</text>
</comment>
<comment type="pathway">
    <text evidence="4">Metabolic intermediate biosynthesis; prephenate biosynthesis; prephenate from chorismate: step 1/1.</text>
</comment>
<comment type="subunit">
    <text evidence="1">Homodimer.</text>
</comment>
<comment type="subcellular location">
    <subcellularLocation>
        <location evidence="2">Cytoplasm</location>
        <location evidence="2">Cytosol</location>
    </subcellularLocation>
</comment>
<comment type="tissue specificity">
    <text evidence="4">Expressed in root, stem, stigma, anther, leaf, petal tube, petal limb and sepal tissues with highest levels in petal tubes and stems.</text>
</comment>
<comment type="developmental stage">
    <text evidence="4">Expressed at similar levels throughout all flowering stages but accumulates in senescing flowers.</text>
</comment>
<proteinExistence type="evidence at protein level"/>
<feature type="chain" id="PRO_0000451506" description="Chorismate mutase 2">
    <location>
        <begin position="1"/>
        <end position="263"/>
    </location>
</feature>
<feature type="domain" description="Chorismate mutase" evidence="3">
    <location>
        <begin position="3"/>
        <end position="256"/>
    </location>
</feature>
<sequence>MACGDYDDKLSLDLIRDSLIRQEDTIIFNLIERIKFPINSTLYKKPSSWFPDFTGSLFQYLFQETEALQSKVGRYLSPEENPFFPDNLPASIVPPSKCPPVLHPVAESININEKILDVYLNQLLPLFCTEADEGNYATTAACDIQLLQAISRRIHYGKFVAEVKFRDCSDEYTPLILAQQDRDALMKLLTFEVVEEMVKKRVAKKAMIFGQEVTLVDNAKEVKCKVDPLLVSRLYDEWIMPLTKHVQVEYLLRRLDQNKLTSI</sequence>
<gene>
    <name evidence="5" type="primary">CM2</name>
</gene>
<organism>
    <name type="scientific">Petunia hybrida</name>
    <name type="common">Petunia</name>
    <dbReference type="NCBI Taxonomy" id="4102"/>
    <lineage>
        <taxon>Eukaryota</taxon>
        <taxon>Viridiplantae</taxon>
        <taxon>Streptophyta</taxon>
        <taxon>Embryophyta</taxon>
        <taxon>Tracheophyta</taxon>
        <taxon>Spermatophyta</taxon>
        <taxon>Magnoliopsida</taxon>
        <taxon>eudicotyledons</taxon>
        <taxon>Gunneridae</taxon>
        <taxon>Pentapetalae</taxon>
        <taxon>asterids</taxon>
        <taxon>lamiids</taxon>
        <taxon>Solanales</taxon>
        <taxon>Solanaceae</taxon>
        <taxon>Petunioideae</taxon>
        <taxon>Petunia</taxon>
    </lineage>
</organism>
<dbReference type="EC" id="5.4.99.5" evidence="3 4"/>
<dbReference type="EMBL" id="EU751617">
    <property type="protein sequence ID" value="ACI41890.1"/>
    <property type="molecule type" value="mRNA"/>
</dbReference>
<dbReference type="SMR" id="D2CSU5"/>
<dbReference type="BRENDA" id="5.4.99.5">
    <property type="organism ID" value="4700"/>
</dbReference>
<dbReference type="UniPathway" id="UPA00120">
    <property type="reaction ID" value="UER00203"/>
</dbReference>
<dbReference type="GO" id="GO:0005829">
    <property type="term" value="C:cytosol"/>
    <property type="evidence" value="ECO:0007669"/>
    <property type="project" value="UniProtKB-SubCell"/>
</dbReference>
<dbReference type="GO" id="GO:0004106">
    <property type="term" value="F:chorismate mutase activity"/>
    <property type="evidence" value="ECO:0000314"/>
    <property type="project" value="UniProtKB"/>
</dbReference>
<dbReference type="GO" id="GO:0008652">
    <property type="term" value="P:amino acid biosynthetic process"/>
    <property type="evidence" value="ECO:0007669"/>
    <property type="project" value="UniProtKB-KW"/>
</dbReference>
<dbReference type="GO" id="GO:0009073">
    <property type="term" value="P:aromatic amino acid family biosynthetic process"/>
    <property type="evidence" value="ECO:0007669"/>
    <property type="project" value="UniProtKB-KW"/>
</dbReference>
<dbReference type="GO" id="GO:0046417">
    <property type="term" value="P:chorismate metabolic process"/>
    <property type="evidence" value="ECO:0000314"/>
    <property type="project" value="UniProtKB"/>
</dbReference>
<dbReference type="Gene3D" id="1.10.590.10">
    <property type="entry name" value="Chorismate mutase, AroQ class superfamily, eukaryotic"/>
    <property type="match status" value="1"/>
</dbReference>
<dbReference type="InterPro" id="IPR036263">
    <property type="entry name" value="Chorismate_II_sf"/>
</dbReference>
<dbReference type="InterPro" id="IPR008238">
    <property type="entry name" value="Chorismate_mutase_AroQ_euk"/>
</dbReference>
<dbReference type="InterPro" id="IPR037039">
    <property type="entry name" value="CM_AroQ_sf_eucaryotic"/>
</dbReference>
<dbReference type="InterPro" id="IPR002701">
    <property type="entry name" value="CM_II_prokaryot"/>
</dbReference>
<dbReference type="NCBIfam" id="TIGR01802">
    <property type="entry name" value="CM_pl-yst"/>
    <property type="match status" value="1"/>
</dbReference>
<dbReference type="PANTHER" id="PTHR21145">
    <property type="entry name" value="CHORISMATE MUTASE"/>
    <property type="match status" value="1"/>
</dbReference>
<dbReference type="PANTHER" id="PTHR21145:SF12">
    <property type="entry name" value="CHORISMATE MUTASE"/>
    <property type="match status" value="1"/>
</dbReference>
<dbReference type="Pfam" id="PF01817">
    <property type="entry name" value="CM_2"/>
    <property type="match status" value="1"/>
</dbReference>
<dbReference type="PIRSF" id="PIRSF017318">
    <property type="entry name" value="Chor_mut_AroQ_eu"/>
    <property type="match status" value="1"/>
</dbReference>
<dbReference type="SUPFAM" id="SSF48600">
    <property type="entry name" value="Chorismate mutase II"/>
    <property type="match status" value="1"/>
</dbReference>
<dbReference type="PROSITE" id="PS51169">
    <property type="entry name" value="CHORISMATE_MUT_3"/>
    <property type="match status" value="1"/>
</dbReference>
<accession>D2CSU5</accession>
<reference key="1">
    <citation type="journal article" date="2010" name="Plant J.">
        <title>A petunia chorismate mutase specialized for the production of floral volatiles.</title>
        <authorList>
            <person name="Colquhoun T.A."/>
            <person name="Schimmel B.C."/>
            <person name="Kim J.Y."/>
            <person name="Reinhardt D."/>
            <person name="Cline K."/>
            <person name="Clark D.G."/>
        </authorList>
    </citation>
    <scope>NUCLEOTIDE SEQUENCE [MRNA]</scope>
    <scope>FUNCTION</scope>
    <scope>CATALYTIC ACTIVITY</scope>
    <scope>TISSUE SPECIFICITY</scope>
    <scope>DEVELOPMENTAL STAGE</scope>
    <scope>PATHWAY</scope>
    <scope>ACTIVITY REGULATION</scope>
    <source>
        <strain>cv. Mitchell</strain>
    </source>
</reference>
<keyword id="KW-0028">Amino-acid biosynthesis</keyword>
<keyword id="KW-0057">Aromatic amino acid biosynthesis</keyword>
<keyword id="KW-0963">Cytoplasm</keyword>
<keyword id="KW-0413">Isomerase</keyword>
<protein>
    <recommendedName>
        <fullName evidence="5">Chorismate mutase 2</fullName>
        <shortName evidence="5">PhCM2</shortName>
        <ecNumber evidence="3 4">5.4.99.5</ecNumber>
    </recommendedName>
</protein>